<evidence type="ECO:0000250" key="1">
    <source>
        <dbReference type="UniProtKB" id="O82015"/>
    </source>
</evidence>
<evidence type="ECO:0000255" key="2"/>
<evidence type="ECO:0000269" key="3">
    <source>
    </source>
</evidence>
<evidence type="ECO:0000303" key="4">
    <source>
    </source>
</evidence>
<comment type="subcellular location">
    <subcellularLocation>
        <location evidence="1">Secreted</location>
    </subcellularLocation>
</comment>
<comment type="allergen">
    <text evidence="3">Causes an allergic reaction in human. Binds to IgE.</text>
</comment>
<comment type="miscellaneous">
    <text evidence="3">On the 2D-gel the determined pI of this protein is: 5.3, its MW is: 17 kDa.</text>
</comment>
<comment type="similarity">
    <text evidence="2">Belongs to the Ole e I family.</text>
</comment>
<name>BETA1_BETVU</name>
<proteinExistence type="evidence at protein level"/>
<reference key="1">
    <citation type="journal article" date="2008" name="Clin. Mol. Allergy">
        <title>The identification of allergen proteins in sugar beet (Beta vulgaris) pollen causing occupational allergy in greenhouses.</title>
        <authorList>
            <person name="Luoto S."/>
            <person name="Lambert W."/>
            <person name="Blomqvist A."/>
            <person name="Emanuelsson C."/>
        </authorList>
    </citation>
    <scope>PROTEIN SEQUENCE</scope>
    <scope>ALLERGEN</scope>
    <source>
        <tissue>Pollen</tissue>
    </source>
</reference>
<dbReference type="Allergome" id="5798">
    <property type="allergen name" value="Beta v 1"/>
</dbReference>
<dbReference type="Allergome" id="5814">
    <property type="allergen name" value="Beta v 1.0101"/>
</dbReference>
<dbReference type="GO" id="GO:0005615">
    <property type="term" value="C:extracellular space"/>
    <property type="evidence" value="ECO:0007669"/>
    <property type="project" value="InterPro"/>
</dbReference>
<dbReference type="InterPro" id="IPR006040">
    <property type="entry name" value="Allergen_Ole_e_I_CS"/>
</dbReference>
<dbReference type="PROSITE" id="PS00925">
    <property type="entry name" value="OLEEI"/>
    <property type="match status" value="1"/>
</dbReference>
<protein>
    <recommendedName>
        <fullName evidence="4">Pollen allergen Beta v 1</fullName>
    </recommendedName>
    <allergenName evidence="4">Beta v 1</allergenName>
</protein>
<sequence length="20" mass="2223">VQGMVYCDTCRSANALGFMR</sequence>
<feature type="chain" id="PRO_0000349147" description="Pollen allergen Beta v 1">
    <location>
        <begin position="1" status="less than"/>
        <end position="20" status="greater than"/>
    </location>
</feature>
<feature type="non-consecutive residues" evidence="4">
    <location>
        <begin position="11"/>
        <end position="12"/>
    </location>
</feature>
<feature type="non-terminal residue" evidence="4">
    <location>
        <position position="1"/>
    </location>
</feature>
<feature type="non-terminal residue" evidence="4">
    <location>
        <position position="20"/>
    </location>
</feature>
<accession>P85983</accession>
<organism>
    <name type="scientific">Beta vulgaris</name>
    <name type="common">Sugar beet</name>
    <dbReference type="NCBI Taxonomy" id="161934"/>
    <lineage>
        <taxon>Eukaryota</taxon>
        <taxon>Viridiplantae</taxon>
        <taxon>Streptophyta</taxon>
        <taxon>Embryophyta</taxon>
        <taxon>Tracheophyta</taxon>
        <taxon>Spermatophyta</taxon>
        <taxon>Magnoliopsida</taxon>
        <taxon>eudicotyledons</taxon>
        <taxon>Gunneridae</taxon>
        <taxon>Pentapetalae</taxon>
        <taxon>Caryophyllales</taxon>
        <taxon>Chenopodiaceae</taxon>
        <taxon>Betoideae</taxon>
        <taxon>Beta</taxon>
    </lineage>
</organism>
<keyword id="KW-0020">Allergen</keyword>
<keyword id="KW-0903">Direct protein sequencing</keyword>
<keyword id="KW-0964">Secreted</keyword>